<sequence length="171" mass="18808">MNKANSFNKEELIACGHGKLFGPNSPRLPVDNMLMIDRIITINDNGGEFGKGEIVAELDIKPELWFFDCHFITDPVMPGCLGLDAMWQLVGFYLGWEGAEGKGRALGVGEVKFTGQVLPGAKKVTYKLNIKRTIHRKLVMGIADAILEVDGRQIYSATDLKVGVFSDTSTF</sequence>
<protein>
    <recommendedName>
        <fullName evidence="1">3-hydroxydecanoyl-[acyl-carrier-protein] dehydratase</fullName>
        <ecNumber evidence="1">4.2.1.59</ecNumber>
    </recommendedName>
    <alternativeName>
        <fullName evidence="1">3-hydroxyacyl-[acyl-carrier-protein] dehydratase FabA</fullName>
    </alternativeName>
    <alternativeName>
        <fullName evidence="1">Beta-hydroxydecanoyl thioester dehydrase</fullName>
    </alternativeName>
    <alternativeName>
        <fullName evidence="1">Trans-2-decenoyl-[acyl-carrier-protein] isomerase</fullName>
        <ecNumber evidence="1">5.3.3.14</ecNumber>
    </alternativeName>
</protein>
<accession>Q8EFV9</accession>
<organism>
    <name type="scientific">Shewanella oneidensis (strain ATCC 700550 / JCM 31522 / CIP 106686 / LMG 19005 / NCIMB 14063 / MR-1)</name>
    <dbReference type="NCBI Taxonomy" id="211586"/>
    <lineage>
        <taxon>Bacteria</taxon>
        <taxon>Pseudomonadati</taxon>
        <taxon>Pseudomonadota</taxon>
        <taxon>Gammaproteobacteria</taxon>
        <taxon>Alteromonadales</taxon>
        <taxon>Shewanellaceae</taxon>
        <taxon>Shewanella</taxon>
    </lineage>
</organism>
<comment type="function">
    <text evidence="1">Necessary for the introduction of cis unsaturation into fatty acids. Catalyzes the dehydration of (3R)-3-hydroxydecanoyl-ACP to E-(2)-decenoyl-ACP and then its isomerization to Z-(3)-decenoyl-ACP. Can catalyze the dehydratase reaction for beta-hydroxyacyl-ACPs with saturated chain lengths up to 16:0, being most active on intermediate chain length.</text>
</comment>
<comment type="catalytic activity">
    <reaction evidence="1">
        <text>a (3R)-hydroxyacyl-[ACP] = a (2E)-enoyl-[ACP] + H2O</text>
        <dbReference type="Rhea" id="RHEA:13097"/>
        <dbReference type="Rhea" id="RHEA-COMP:9925"/>
        <dbReference type="Rhea" id="RHEA-COMP:9945"/>
        <dbReference type="ChEBI" id="CHEBI:15377"/>
        <dbReference type="ChEBI" id="CHEBI:78784"/>
        <dbReference type="ChEBI" id="CHEBI:78827"/>
        <dbReference type="EC" id="4.2.1.59"/>
    </reaction>
</comment>
<comment type="catalytic activity">
    <reaction evidence="1">
        <text>(3R)-hydroxydecanoyl-[ACP] = (2E)-decenoyl-[ACP] + H2O</text>
        <dbReference type="Rhea" id="RHEA:41860"/>
        <dbReference type="Rhea" id="RHEA-COMP:9638"/>
        <dbReference type="Rhea" id="RHEA-COMP:9639"/>
        <dbReference type="ChEBI" id="CHEBI:15377"/>
        <dbReference type="ChEBI" id="CHEBI:78466"/>
        <dbReference type="ChEBI" id="CHEBI:78467"/>
    </reaction>
</comment>
<comment type="catalytic activity">
    <reaction evidence="1">
        <text>(2E)-decenoyl-[ACP] = (3Z)-decenoyl-[ACP]</text>
        <dbReference type="Rhea" id="RHEA:23568"/>
        <dbReference type="Rhea" id="RHEA-COMP:9639"/>
        <dbReference type="Rhea" id="RHEA-COMP:9927"/>
        <dbReference type="ChEBI" id="CHEBI:78467"/>
        <dbReference type="ChEBI" id="CHEBI:78798"/>
        <dbReference type="EC" id="5.3.3.14"/>
    </reaction>
</comment>
<comment type="pathway">
    <text evidence="1">Lipid metabolism; fatty acid biosynthesis.</text>
</comment>
<comment type="subunit">
    <text evidence="1">Homodimer.</text>
</comment>
<comment type="subcellular location">
    <subcellularLocation>
        <location evidence="1">Cytoplasm</location>
    </subcellularLocation>
</comment>
<comment type="similarity">
    <text evidence="1">Belongs to the thioester dehydratase family. FabA subfamily.</text>
</comment>
<gene>
    <name evidence="1" type="primary">fabA</name>
    <name type="ordered locus">SO_1856</name>
</gene>
<proteinExistence type="inferred from homology"/>
<keyword id="KW-0963">Cytoplasm</keyword>
<keyword id="KW-0275">Fatty acid biosynthesis</keyword>
<keyword id="KW-0276">Fatty acid metabolism</keyword>
<keyword id="KW-0413">Isomerase</keyword>
<keyword id="KW-0444">Lipid biosynthesis</keyword>
<keyword id="KW-0443">Lipid metabolism</keyword>
<keyword id="KW-0456">Lyase</keyword>
<keyword id="KW-1185">Reference proteome</keyword>
<feature type="chain" id="PRO_0000091615" description="3-hydroxydecanoyl-[acyl-carrier-protein] dehydratase">
    <location>
        <begin position="1"/>
        <end position="171"/>
    </location>
</feature>
<feature type="active site" evidence="1">
    <location>
        <position position="70"/>
    </location>
</feature>
<name>FABA_SHEON</name>
<dbReference type="EC" id="4.2.1.59" evidence="1"/>
<dbReference type="EC" id="5.3.3.14" evidence="1"/>
<dbReference type="EMBL" id="AE014299">
    <property type="protein sequence ID" value="AAN54908.1"/>
    <property type="molecule type" value="Genomic_DNA"/>
</dbReference>
<dbReference type="RefSeq" id="NP_717464.1">
    <property type="nucleotide sequence ID" value="NC_004347.2"/>
</dbReference>
<dbReference type="RefSeq" id="WP_011071970.1">
    <property type="nucleotide sequence ID" value="NZ_CP053946.1"/>
</dbReference>
<dbReference type="SMR" id="Q8EFV9"/>
<dbReference type="STRING" id="211586.SO_1856"/>
<dbReference type="PaxDb" id="211586-SO_1856"/>
<dbReference type="GeneID" id="75189264"/>
<dbReference type="KEGG" id="son:SO_1856"/>
<dbReference type="PATRIC" id="fig|211586.12.peg.1784"/>
<dbReference type="eggNOG" id="COG0764">
    <property type="taxonomic scope" value="Bacteria"/>
</dbReference>
<dbReference type="HOGENOM" id="CLU_097925_0_0_6"/>
<dbReference type="OrthoDB" id="9786735at2"/>
<dbReference type="PhylomeDB" id="Q8EFV9"/>
<dbReference type="BioCyc" id="SONE211586:G1GMP-1708-MONOMER"/>
<dbReference type="UniPathway" id="UPA00094"/>
<dbReference type="Proteomes" id="UP000008186">
    <property type="component" value="Chromosome"/>
</dbReference>
<dbReference type="GO" id="GO:0005737">
    <property type="term" value="C:cytoplasm"/>
    <property type="evidence" value="ECO:0007669"/>
    <property type="project" value="UniProtKB-SubCell"/>
</dbReference>
<dbReference type="GO" id="GO:0019171">
    <property type="term" value="F:(3R)-hydroxyacyl-[acyl-carrier-protein] dehydratase activity"/>
    <property type="evidence" value="ECO:0007669"/>
    <property type="project" value="UniProtKB-UniRule"/>
</dbReference>
<dbReference type="GO" id="GO:0034017">
    <property type="term" value="F:trans-2-decenoyl-acyl-carrier-protein isomerase activity"/>
    <property type="evidence" value="ECO:0007669"/>
    <property type="project" value="UniProtKB-UniRule"/>
</dbReference>
<dbReference type="GO" id="GO:0006636">
    <property type="term" value="P:unsaturated fatty acid biosynthetic process"/>
    <property type="evidence" value="ECO:0007669"/>
    <property type="project" value="UniProtKB-UniRule"/>
</dbReference>
<dbReference type="CDD" id="cd01287">
    <property type="entry name" value="FabA"/>
    <property type="match status" value="1"/>
</dbReference>
<dbReference type="Gene3D" id="3.10.129.10">
    <property type="entry name" value="Hotdog Thioesterase"/>
    <property type="match status" value="1"/>
</dbReference>
<dbReference type="HAMAP" id="MF_00405">
    <property type="entry name" value="FabA"/>
    <property type="match status" value="1"/>
</dbReference>
<dbReference type="InterPro" id="IPR010083">
    <property type="entry name" value="FabA"/>
</dbReference>
<dbReference type="InterPro" id="IPR013114">
    <property type="entry name" value="FabA_FabZ"/>
</dbReference>
<dbReference type="InterPro" id="IPR029069">
    <property type="entry name" value="HotDog_dom_sf"/>
</dbReference>
<dbReference type="NCBIfam" id="TIGR01749">
    <property type="entry name" value="fabA"/>
    <property type="match status" value="1"/>
</dbReference>
<dbReference type="NCBIfam" id="NF003509">
    <property type="entry name" value="PRK05174.1"/>
    <property type="match status" value="1"/>
</dbReference>
<dbReference type="PANTHER" id="PTHR30272">
    <property type="entry name" value="3-HYDROXYACYL-[ACYL-CARRIER-PROTEIN] DEHYDRATASE"/>
    <property type="match status" value="1"/>
</dbReference>
<dbReference type="PANTHER" id="PTHR30272:SF8">
    <property type="entry name" value="3-HYDROXYDECANOYL-[ACYL-CARRIER-PROTEIN] DEHYDRATASE"/>
    <property type="match status" value="1"/>
</dbReference>
<dbReference type="Pfam" id="PF07977">
    <property type="entry name" value="FabA"/>
    <property type="match status" value="1"/>
</dbReference>
<dbReference type="SUPFAM" id="SSF54637">
    <property type="entry name" value="Thioesterase/thiol ester dehydrase-isomerase"/>
    <property type="match status" value="1"/>
</dbReference>
<evidence type="ECO:0000255" key="1">
    <source>
        <dbReference type="HAMAP-Rule" id="MF_00405"/>
    </source>
</evidence>
<reference key="1">
    <citation type="journal article" date="2002" name="Nat. Biotechnol.">
        <title>Genome sequence of the dissimilatory metal ion-reducing bacterium Shewanella oneidensis.</title>
        <authorList>
            <person name="Heidelberg J.F."/>
            <person name="Paulsen I.T."/>
            <person name="Nelson K.E."/>
            <person name="Gaidos E.J."/>
            <person name="Nelson W.C."/>
            <person name="Read T.D."/>
            <person name="Eisen J.A."/>
            <person name="Seshadri R."/>
            <person name="Ward N.L."/>
            <person name="Methe B.A."/>
            <person name="Clayton R.A."/>
            <person name="Meyer T."/>
            <person name="Tsapin A."/>
            <person name="Scott J."/>
            <person name="Beanan M.J."/>
            <person name="Brinkac L.M."/>
            <person name="Daugherty S.C."/>
            <person name="DeBoy R.T."/>
            <person name="Dodson R.J."/>
            <person name="Durkin A.S."/>
            <person name="Haft D.H."/>
            <person name="Kolonay J.F."/>
            <person name="Madupu R."/>
            <person name="Peterson J.D."/>
            <person name="Umayam L.A."/>
            <person name="White O."/>
            <person name="Wolf A.M."/>
            <person name="Vamathevan J.J."/>
            <person name="Weidman J.F."/>
            <person name="Impraim M."/>
            <person name="Lee K."/>
            <person name="Berry K.J."/>
            <person name="Lee C."/>
            <person name="Mueller J."/>
            <person name="Khouri H.M."/>
            <person name="Gill J."/>
            <person name="Utterback T.R."/>
            <person name="McDonald L.A."/>
            <person name="Feldblyum T.V."/>
            <person name="Smith H.O."/>
            <person name="Venter J.C."/>
            <person name="Nealson K.H."/>
            <person name="Fraser C.M."/>
        </authorList>
    </citation>
    <scope>NUCLEOTIDE SEQUENCE [LARGE SCALE GENOMIC DNA]</scope>
    <source>
        <strain>ATCC 700550 / JCM 31522 / CIP 106686 / LMG 19005 / NCIMB 14063 / MR-1</strain>
    </source>
</reference>